<feature type="chain" id="PRO_0000461143" description="Protein U10">
    <location>
        <begin position="1"/>
        <end position="503"/>
    </location>
</feature>
<comment type="similarity">
    <text evidence="1">Belongs to the herpesviridae U10 family.</text>
</comment>
<dbReference type="EMBL" id="AB021506">
    <property type="protein sequence ID" value="BAA78230.1"/>
    <property type="molecule type" value="Genomic_DNA"/>
</dbReference>
<dbReference type="PIR" id="T43969">
    <property type="entry name" value="T43969"/>
</dbReference>
<dbReference type="RefSeq" id="NP_050191.1">
    <property type="nucleotide sequence ID" value="NC_000898.1"/>
</dbReference>
<dbReference type="SMR" id="P0DTP0"/>
<dbReference type="GeneID" id="1497010"/>
<dbReference type="KEGG" id="vg:1497010"/>
<dbReference type="Proteomes" id="UP000142685">
    <property type="component" value="Segment"/>
</dbReference>
<dbReference type="InterPro" id="IPR007578">
    <property type="entry name" value="Herpes_U10"/>
</dbReference>
<dbReference type="Pfam" id="PF04489">
    <property type="entry name" value="DUF570"/>
    <property type="match status" value="1"/>
</dbReference>
<organism>
    <name type="scientific">Human herpesvirus 6B</name>
    <name type="common">HHV-6 variant B</name>
    <name type="synonym">Human B lymphotropic virus</name>
    <dbReference type="NCBI Taxonomy" id="32604"/>
    <lineage>
        <taxon>Viruses</taxon>
        <taxon>Duplodnaviria</taxon>
        <taxon>Heunggongvirae</taxon>
        <taxon>Peploviricota</taxon>
        <taxon>Herviviricetes</taxon>
        <taxon>Herpesvirales</taxon>
        <taxon>Orthoherpesviridae</taxon>
        <taxon>Betaherpesvirinae</taxon>
        <taxon>Roseolovirus</taxon>
        <taxon>Roseolovirus humanbeta6b</taxon>
    </lineage>
</organism>
<accession>P0DTP0</accession>
<accession>Q77PV5</accession>
<accession>Q9WT54</accession>
<gene>
    <name type="primary">U10</name>
</gene>
<sequence>MEIVTYKTASARSPTVTWSSGFGRAIASIQKRHQENIRKPLRFYSGLLHCLIKQYEHCLVPPNKSIRFDKGKIEVAALILDLGHQVLGRQIHVRQRIYSWTSITLPKLFTPRELYFLVASPEDEDIVFNPTITKGGWISGSFSYPVEYRSNFSLTGMSANVLMVPFVPYRYPLNYARFISSIDLMILNEQFPEHECGDIQILKQRNYLYLGVIKNLTWKKSVTGTGQTAPHRILKASFIGSWPDTSLPDRVALRFFNNTRFTIHCHEFAINIENLGLVKNKEKVFGTLATVCCEQIPSLLTTENLPRYLIVQFEVVTQIEDPEPLLFSSNPKLYFTGDVLNATMQLQHNPNYYDLLVHAPYDIHFYPSRCHIVILPIRYFTRGDKQILISGYQNEGFFETQVMLWAPGTPLHITLRSFSPNLILPQSTPIATLFYVERMTSQNTEQKDVIAKLSENGHFIGNLKLPRENFLHHDAITDLSLAAIPKDSATPGPGTVSSSVSPS</sequence>
<proteinExistence type="inferred from homology"/>
<organismHost>
    <name type="scientific">Homo sapiens</name>
    <name type="common">Human</name>
    <dbReference type="NCBI Taxonomy" id="9606"/>
</organismHost>
<protein>
    <recommendedName>
        <fullName>Protein U10</fullName>
    </recommendedName>
</protein>
<reference key="1">
    <citation type="journal article" date="1999" name="J. Virol.">
        <title>Comparison of the complete DNA sequences of human herpesvirus 6 variants A and B.</title>
        <authorList>
            <person name="Isegawa Y."/>
            <person name="Mukai T."/>
            <person name="Nakano K."/>
            <person name="Kagawa M."/>
            <person name="Chen J."/>
            <person name="Mori Y."/>
            <person name="Sunagawa T."/>
            <person name="Kawanishi K."/>
            <person name="Sashihara J."/>
            <person name="Hata A."/>
            <person name="Zou P."/>
            <person name="Kosuge H."/>
            <person name="Yamanishi K."/>
        </authorList>
    </citation>
    <scope>NUCLEOTIDE SEQUENCE [LARGE SCALE GENOMIC DNA]</scope>
    <source>
        <strain>HST</strain>
    </source>
</reference>
<name>U10_HHV6H</name>
<evidence type="ECO:0000305" key="1"/>